<gene>
    <name evidence="5" type="primary">gli1</name>
    <name type="ORF">Smp_266960</name>
</gene>
<protein>
    <recommendedName>
        <fullName evidence="6">Zinc finger protein GLI1</fullName>
    </recommendedName>
</protein>
<comment type="function">
    <text evidence="4">Probable transcription factor which plays an essential role in males to trigger female sexual development by inducing NRPS expression in male (PubMed:35385687). NRPS produces the pheromone beta-alanyl-tryptamine (BATT), which stimulates female sexual development (PubMed:35385687).</text>
</comment>
<comment type="subcellular location">
    <subcellularLocation>
        <location evidence="1">Nucleus</location>
    </subcellularLocation>
</comment>
<comment type="alternative products">
    <event type="alternative splicing"/>
    <isoform>
        <id>A0A5K4F1D0-1</id>
        <name>1</name>
        <sequence type="displayed"/>
    </isoform>
    <isoform>
        <id>A0A5K4F1D0-2</id>
        <name>2</name>
        <sequence type="described" ref="VSP_061676"/>
    </isoform>
</comment>
<comment type="tissue specificity">
    <text evidence="4">Expressed in female-paired or unpaired males along the ventral surface in neurons and skin tegument cells (PubMed:35385687). In virgin and mature females, expressed bilaterally along the edges of the body in neurons (PubMed:35385687). In mature females, also expressed in skin tegument cells (PubMed:35385687).</text>
</comment>
<comment type="disruption phenotype">
    <text evidence="4">RNAi-mediated knockdown in males results in impaired female sexual development following pairing characterized by loss of vitellaria and ovary differentiation and egg production (PubMed:35385687). Severely reduces NRPS mRNA induction in males and downregulates NRPS mRNA in females post-paring (PubMed:35385687). Also, production of beta-alanyl-tryptamine (BATT) is impaired in males (PubMed:35385687). RNAi-mediated knockdown in females has no effect on the development of the vitellaria or egg production (PubMed:35385687).</text>
</comment>
<comment type="similarity">
    <text evidence="6">Belongs to the GLI C2H2-type zinc-finger protein family.</text>
</comment>
<name>GLI1_SCHMA</name>
<feature type="chain" id="PRO_0000456803" description="Zinc finger protein GLI1">
    <location>
        <begin position="1"/>
        <end position="2566"/>
    </location>
</feature>
<feature type="zinc finger region" description="C2H2-type 1; degenerate" evidence="2">
    <location>
        <begin position="1088"/>
        <end position="1110"/>
    </location>
</feature>
<feature type="zinc finger region" description="C2H2-type 2" evidence="2">
    <location>
        <begin position="1116"/>
        <end position="1140"/>
    </location>
</feature>
<feature type="zinc finger region" description="C2H2-type 3" evidence="2">
    <location>
        <begin position="1146"/>
        <end position="1171"/>
    </location>
</feature>
<feature type="zinc finger region" description="C2H2-type 4" evidence="2">
    <location>
        <begin position="1177"/>
        <end position="1202"/>
    </location>
</feature>
<feature type="region of interest" description="Disordered" evidence="3">
    <location>
        <begin position="349"/>
        <end position="375"/>
    </location>
</feature>
<feature type="region of interest" description="Disordered" evidence="3">
    <location>
        <begin position="430"/>
        <end position="508"/>
    </location>
</feature>
<feature type="region of interest" description="Disordered" evidence="3">
    <location>
        <begin position="985"/>
        <end position="1046"/>
    </location>
</feature>
<feature type="region of interest" description="Disordered" evidence="3">
    <location>
        <begin position="1254"/>
        <end position="1313"/>
    </location>
</feature>
<feature type="region of interest" description="Disordered" evidence="3">
    <location>
        <begin position="1465"/>
        <end position="1491"/>
    </location>
</feature>
<feature type="region of interest" description="Disordered" evidence="3">
    <location>
        <begin position="1650"/>
        <end position="1677"/>
    </location>
</feature>
<feature type="region of interest" description="Disordered" evidence="3">
    <location>
        <begin position="1727"/>
        <end position="1791"/>
    </location>
</feature>
<feature type="region of interest" description="Disordered" evidence="3">
    <location>
        <begin position="2067"/>
        <end position="2091"/>
    </location>
</feature>
<feature type="compositionally biased region" description="Polar residues" evidence="3">
    <location>
        <begin position="434"/>
        <end position="444"/>
    </location>
</feature>
<feature type="compositionally biased region" description="Polar residues" evidence="3">
    <location>
        <begin position="457"/>
        <end position="492"/>
    </location>
</feature>
<feature type="compositionally biased region" description="Low complexity" evidence="3">
    <location>
        <begin position="493"/>
        <end position="508"/>
    </location>
</feature>
<feature type="compositionally biased region" description="Polar residues" evidence="3">
    <location>
        <begin position="993"/>
        <end position="1016"/>
    </location>
</feature>
<feature type="compositionally biased region" description="Acidic residues" evidence="3">
    <location>
        <begin position="1023"/>
        <end position="1035"/>
    </location>
</feature>
<feature type="compositionally biased region" description="Low complexity" evidence="3">
    <location>
        <begin position="1661"/>
        <end position="1677"/>
    </location>
</feature>
<feature type="compositionally biased region" description="Low complexity" evidence="3">
    <location>
        <begin position="1727"/>
        <end position="1743"/>
    </location>
</feature>
<feature type="compositionally biased region" description="Basic residues" evidence="3">
    <location>
        <begin position="1752"/>
        <end position="1769"/>
    </location>
</feature>
<feature type="compositionally biased region" description="Polar residues" evidence="3">
    <location>
        <begin position="1770"/>
        <end position="1791"/>
    </location>
</feature>
<feature type="compositionally biased region" description="Low complexity" evidence="3">
    <location>
        <begin position="2070"/>
        <end position="2090"/>
    </location>
</feature>
<feature type="splice variant" id="VSP_061676" description="In isoform 2." evidence="6">
    <location>
        <begin position="1206"/>
        <end position="1225"/>
    </location>
</feature>
<proteinExistence type="evidence at transcript level"/>
<keyword id="KW-0025">Alternative splicing</keyword>
<keyword id="KW-0238">DNA-binding</keyword>
<keyword id="KW-0479">Metal-binding</keyword>
<keyword id="KW-0539">Nucleus</keyword>
<keyword id="KW-1185">Reference proteome</keyword>
<keyword id="KW-0677">Repeat</keyword>
<keyword id="KW-0804">Transcription</keyword>
<keyword id="KW-0805">Transcription regulation</keyword>
<keyword id="KW-0862">Zinc</keyword>
<keyword id="KW-0863">Zinc-finger</keyword>
<sequence length="2566" mass="285897">MTGSDSSMCDLEVKSSLSLTSHLHEYQRNPLFHINTTTLTTTTTINNHINTTSTNNYQQQNDTMYDNNNNNVDNDMKVKSSMNDCINDNTINDTHSTTVIHAENENPRRPIPLTNTSNLEGSTSNVGGNSNFQTMSGNTIPFLPISATNDGRYEWPPSMRYSSANTDRFIQGINTNTDNRQEDFRNQLTSNNNNNYNFKSNNTADNEINQTNHHNLPQFANEKLLDSVRSKNFNNTNISNKVECSSPDANMVAAVAFNAVRRWFTNSSTLTNSDNTMKSVWNENMRTGNSGTNSIGFMNQSNILPYASLNSRLQHPLLPPPLVLNSTVGNATTQNSTHNNYGMFMHRGHHSSGYVPNHTAPMLRGGKKRSHSQSSVNELFDISSLTRSSQGSLNIMQSMRGSHSMGPSAEGSYGHLSAASLGASPGASCDIRRTLSSNGNSSHTAPPAPFSERSPFWSPNSPHSSGSGFDNYQTSSHKSLPLPSTLQTYQQHSGYTSTSGSSGNRSTGCLNRAPFGHLAVLSSSNSLNKQIQQQSDSNSVSNCSIDVPKKLTTNSSNMILPSCRTLGLPTNSVTVSSSEITKNCNNNVLQSAMAFAAVAVAAAAASSTTSSITERENSSLLNKHVLENTLHRECRDHGLHQHPSSECESCSSTLTMGNNNNKLNESINSVYNNLVPSCFMKPPSSATIKSLATTTDNNNSNTNILSNDLSTDNRNKSLNKLPCYNNDADANDTCMDATNNENIQQGVLRKIIPSTPSHFQFSSKTYNQLTQNNSSNKPITAVNNGNDVNNGGNMSSSFTNPLHWPFESIPTPDWSHTWFNNNNNNNTNSTIRFQLNPNETIRRNGRVKIEQIDLNSTVLSKSEMSELLINENSNNNHHHLFGKGNNLLCPTLTKDLLKQHCALNNSDINSITNSLLNQQSSQRKQIDGTLNQMRGIKNFGRTCRITPVLEAITPGITTSISETSAVASSSTTAATPTTTGLFKQKSIEHSHKWQNQNVFSSRRNSTRDPSNNNNSGVGRCSVDEPDVDDDEELDDDGRVPQEGDPDFVETTCRWGDCTLQFDDQDELVKHLSTEHIAGNKKSFVCLWRECVRGTRPFKAQYMLVVHMRRHTGEKPHKCIFEGCIKRYSRLENLKTHLRSHTGEKPYQCEIPGCNKAFSNASDRAKHQNRTHSNEKPYTCKVDGCSKRYTDPSSLRKHVKTVHGAESLMKTSLQKKNSFGVNMLMKVYANKKHKGESWSDRPCGGSGFGGGHLFGNSNNNNSYPSQDKRSNGSMPGIRGRFGPRGMNDNGNIFHRGTYTDREQRPSSSSNPRDSCLACLSNPVHTTTIHPVDINAESIITEYPNQDLSKLKRFSIEESGRNTSHNMNWYLPETDNQNVHSSVLMMASSPAVYNTRNDYFPSFKCEHSIYPNYFSFARNMIHTEDTNQNDNNNNNLVLSWTSPTTPSPCDNLYLDQKINPSITLQPLSTTSNPVQSLSPSIDNPINSTGTKQKNLFSPVNESVTMIRNENCDQSKPVCVYGTSDDLAKDFKKSLKTEENNLIWNWKYSQPSIDGMNKDHCNKKHSILRFDDQDMKKPLPGYLSTSLESRSNTQLALNPNDQTVNQLTRSINNEHFNEMSNMSTTTINETYRENNLQFNFPLKWKVEDPLAYSKNMDNNSQTKNNNELNEENSPQSNQNECISNVPLLNNHYLEDVTEQKSQLCVIECPNRLRSMQDICSSNDIWDSESAAASSGIGSGVTTTTASDNSNPTAQNHHHQKQQPKHSHQHQNRTKSINSDNNYSNQDNVSTMDNDETFFNNENIKSDLGSIDRSSLFGTPRTDSNSTGCSYERTFNPQINYKNDNLIHSSCTCIQKRQKRDNSQSTCSYHRHYHDQLVDGNISSQLDSEQLSATSSQVSSGLGSMTSSNAGSGCNCTGTGLNNTNINVLDNVSGNVSSNICVNTLPRLVEGDNSSNLTNDYPNNSQVFNEDDNNISKMWRKYYKSYGYCSPCNNQPETFYPEVFNSETECYSNTPATVINGLSSTASPVPPSISTYHYHHNPHLHHQHQQRQSQHNLDLVMSNSNHYNDEMHFSPHSYVHSSSSNSSPFNSNRPHSVETFSHNNLTNNSLFDHRRYTHTSLSTTNNNHVNEMNNSINQINPKHPYNICLSSINNNNNQCDTNSNMILKRHSITDDLCHVNGTWFTNEYNGNDNHHYWTHPYNVNQLSIGNQIPNWLNKSVLTSSSPSSSSRLTSTSLTEAIRTHNSSDSLCVTSRFNDSINYYQEYTNCCQPTINSFQINQSSLSSTMSTKTSAKLQSKLSWTTDDNYSEYLCSNHSQNSYIQSNRLVNNNNSSNNDNLIEMDRNNRTNIQRNCSSELNCYTNFQNNTTQLENMDHINTNPLLISLASSQPFLMSSFNTTSISTTSEQTPYSSYHLTPTSNTVHQISQRGIEQMNKMNNLHSNNQLSTIASVTASETTTSTSTVSSYQNLKEREVYNFPVPNPLHTYINPFHSSNSLYSSFLQSVFEEPTFTSSSSSSSPSPSLLLSSSSSTHLGHFNQLFVNADPISNNLVVCNMSTMDTDCAPFHSSN</sequence>
<dbReference type="SMR" id="A0A5K4F1D0"/>
<dbReference type="STRING" id="6183.A0A5K4F1D0"/>
<dbReference type="EnsemblMetazoa" id="Smp_266960.1">
    <molecule id="A0A5K4F1D0-2"/>
    <property type="protein sequence ID" value="Smp_266960.1"/>
    <property type="gene ID" value="Smp_266960"/>
</dbReference>
<dbReference type="EnsemblMetazoa" id="Smp_266960.2">
    <molecule id="A0A5K4F1D0-1"/>
    <property type="protein sequence ID" value="Smp_266960.2"/>
    <property type="gene ID" value="Smp_266960"/>
</dbReference>
<dbReference type="WBParaSite" id="Smp_266960.1">
    <property type="protein sequence ID" value="Smp_266960.1"/>
    <property type="gene ID" value="Smp_266960"/>
</dbReference>
<dbReference type="InParanoid" id="A0A5K4F1D0"/>
<dbReference type="Proteomes" id="UP000008854">
    <property type="component" value="Unassembled WGS sequence"/>
</dbReference>
<dbReference type="GO" id="GO:0005634">
    <property type="term" value="C:nucleus"/>
    <property type="evidence" value="ECO:0007669"/>
    <property type="project" value="UniProtKB-SubCell"/>
</dbReference>
<dbReference type="GO" id="GO:0000981">
    <property type="term" value="F:DNA-binding transcription factor activity, RNA polymerase II-specific"/>
    <property type="evidence" value="ECO:0007669"/>
    <property type="project" value="TreeGrafter"/>
</dbReference>
<dbReference type="GO" id="GO:0000978">
    <property type="term" value="F:RNA polymerase II cis-regulatory region sequence-specific DNA binding"/>
    <property type="evidence" value="ECO:0007669"/>
    <property type="project" value="TreeGrafter"/>
</dbReference>
<dbReference type="GO" id="GO:0008270">
    <property type="term" value="F:zinc ion binding"/>
    <property type="evidence" value="ECO:0007669"/>
    <property type="project" value="UniProtKB-KW"/>
</dbReference>
<dbReference type="GO" id="GO:0045893">
    <property type="term" value="P:positive regulation of DNA-templated transcription"/>
    <property type="evidence" value="ECO:0000315"/>
    <property type="project" value="UniProtKB"/>
</dbReference>
<dbReference type="FunFam" id="3.30.160.60:FF:000019">
    <property type="entry name" value="GLI family zinc finger 3"/>
    <property type="match status" value="1"/>
</dbReference>
<dbReference type="FunFam" id="3.30.160.60:FF:000031">
    <property type="entry name" value="GLI family zinc finger 3"/>
    <property type="match status" value="1"/>
</dbReference>
<dbReference type="FunFam" id="3.30.160.60:FF:000036">
    <property type="entry name" value="GLI family zinc finger 3"/>
    <property type="match status" value="1"/>
</dbReference>
<dbReference type="FunFam" id="3.30.160.60:FF:000048">
    <property type="entry name" value="GLI family zinc finger 3"/>
    <property type="match status" value="1"/>
</dbReference>
<dbReference type="Gene3D" id="3.30.160.60">
    <property type="entry name" value="Classic Zinc Finger"/>
    <property type="match status" value="5"/>
</dbReference>
<dbReference type="InterPro" id="IPR043359">
    <property type="entry name" value="GLI-like"/>
</dbReference>
<dbReference type="InterPro" id="IPR056436">
    <property type="entry name" value="Znf-C2H2_ZIC1-5/GLI1-3-like"/>
</dbReference>
<dbReference type="InterPro" id="IPR036236">
    <property type="entry name" value="Znf_C2H2_sf"/>
</dbReference>
<dbReference type="InterPro" id="IPR013087">
    <property type="entry name" value="Znf_C2H2_type"/>
</dbReference>
<dbReference type="PANTHER" id="PTHR45718">
    <property type="entry name" value="TRANSCRIPTIONAL ACTIVATOR CUBITUS INTERRUPTUS"/>
    <property type="match status" value="1"/>
</dbReference>
<dbReference type="PANTHER" id="PTHR45718:SF4">
    <property type="entry name" value="TRANSCRIPTIONAL ACTIVATOR CUBITUS INTERRUPTUS"/>
    <property type="match status" value="1"/>
</dbReference>
<dbReference type="Pfam" id="PF00096">
    <property type="entry name" value="zf-C2H2"/>
    <property type="match status" value="2"/>
</dbReference>
<dbReference type="Pfam" id="PF23561">
    <property type="entry name" value="zf-C2H2_15"/>
    <property type="match status" value="1"/>
</dbReference>
<dbReference type="SMART" id="SM00355">
    <property type="entry name" value="ZnF_C2H2"/>
    <property type="match status" value="5"/>
</dbReference>
<dbReference type="SUPFAM" id="SSF57667">
    <property type="entry name" value="beta-beta-alpha zinc fingers"/>
    <property type="match status" value="3"/>
</dbReference>
<dbReference type="PROSITE" id="PS00028">
    <property type="entry name" value="ZINC_FINGER_C2H2_1"/>
    <property type="match status" value="4"/>
</dbReference>
<dbReference type="PROSITE" id="PS50157">
    <property type="entry name" value="ZINC_FINGER_C2H2_2"/>
    <property type="match status" value="4"/>
</dbReference>
<organism evidence="7">
    <name type="scientific">Schistosoma mansoni</name>
    <name type="common">Blood fluke</name>
    <dbReference type="NCBI Taxonomy" id="6183"/>
    <lineage>
        <taxon>Eukaryota</taxon>
        <taxon>Metazoa</taxon>
        <taxon>Spiralia</taxon>
        <taxon>Lophotrochozoa</taxon>
        <taxon>Platyhelminthes</taxon>
        <taxon>Trematoda</taxon>
        <taxon>Digenea</taxon>
        <taxon>Strigeidida</taxon>
        <taxon>Schistosomatoidea</taxon>
        <taxon>Schistosomatidae</taxon>
        <taxon>Schistosoma</taxon>
    </lineage>
</organism>
<evidence type="ECO:0000250" key="1">
    <source>
        <dbReference type="UniProtKB" id="P08151"/>
    </source>
</evidence>
<evidence type="ECO:0000255" key="2">
    <source>
        <dbReference type="PROSITE-ProRule" id="PRU00042"/>
    </source>
</evidence>
<evidence type="ECO:0000256" key="3">
    <source>
        <dbReference type="SAM" id="MobiDB-lite"/>
    </source>
</evidence>
<evidence type="ECO:0000269" key="4">
    <source>
    </source>
</evidence>
<evidence type="ECO:0000303" key="5">
    <source>
    </source>
</evidence>
<evidence type="ECO:0000305" key="6"/>
<evidence type="ECO:0000312" key="7">
    <source>
        <dbReference type="Proteomes" id="UP000008854"/>
    </source>
</evidence>
<reference evidence="7" key="1">
    <citation type="journal article" date="2012" name="PLoS Negl. Trop. Dis.">
        <title>A systematically improved high quality genome and transcriptome of the human blood fluke Schistosoma mansoni.</title>
        <authorList>
            <person name="Protasio A.V."/>
            <person name="Tsai I.J."/>
            <person name="Babbage A."/>
            <person name="Nichol S."/>
            <person name="Hunt M."/>
            <person name="Aslett M.A."/>
            <person name="De Silva N."/>
            <person name="Velarde G.S."/>
            <person name="Anderson T.J."/>
            <person name="Clark R.C."/>
            <person name="Davidson C."/>
            <person name="Dillon G.P."/>
            <person name="Holroyd N.E."/>
            <person name="LoVerde P.T."/>
            <person name="Lloyd C."/>
            <person name="McQuillan J."/>
            <person name="Oliveira G."/>
            <person name="Otto T.D."/>
            <person name="Parker-Manuel S.J."/>
            <person name="Quail M.A."/>
            <person name="Wilson R.A."/>
            <person name="Zerlotini A."/>
            <person name="Dunne D.W."/>
            <person name="Berriman M."/>
        </authorList>
    </citation>
    <scope>NUCLEOTIDE SEQUENCE [LARGE SCALE GENOMIC DNA]</scope>
    <source>
        <strain evidence="7">Puerto Rican</strain>
    </source>
</reference>
<reference evidence="6" key="2">
    <citation type="journal article" date="2022" name="Cell">
        <title>A male-derived nonribosomal peptide pheromone controls female schistosome development.</title>
        <authorList>
            <person name="Chen R."/>
            <person name="Wang J."/>
            <person name="Gradinaru I."/>
            <person name="Vu H.S."/>
            <person name="Geboers S."/>
            <person name="Naidoo J."/>
            <person name="Ready J.M."/>
            <person name="Williams N.S."/>
            <person name="DeBerardinis R.J."/>
            <person name="Ross E.M."/>
            <person name="Collins J.J. III"/>
        </authorList>
    </citation>
    <scope>FUNCTION</scope>
    <scope>TISSUE SPECIFICITY</scope>
    <scope>DISRUPTION PHENOTYPE</scope>
</reference>
<accession>A0A5K4F1D0</accession>
<accession>A0A5K4F1Q4</accession>